<keyword id="KW-0030">Aminoacyl-tRNA synthetase</keyword>
<keyword id="KW-0067">ATP-binding</keyword>
<keyword id="KW-0436">Ligase</keyword>
<keyword id="KW-0479">Metal-binding</keyword>
<keyword id="KW-0547">Nucleotide-binding</keyword>
<keyword id="KW-1185">Reference proteome</keyword>
<keyword id="KW-0862">Zinc</keyword>
<organism>
    <name type="scientific">Pseudomonas putida (strain ATCC 47054 / DSM 6125 / CFBP 8728 / NCIMB 11950 / KT2440)</name>
    <dbReference type="NCBI Taxonomy" id="160488"/>
    <lineage>
        <taxon>Bacteria</taxon>
        <taxon>Pseudomonadati</taxon>
        <taxon>Pseudomonadota</taxon>
        <taxon>Gammaproteobacteria</taxon>
        <taxon>Pseudomonadales</taxon>
        <taxon>Pseudomonadaceae</taxon>
        <taxon>Pseudomonas</taxon>
    </lineage>
</organism>
<proteinExistence type="inferred from homology"/>
<evidence type="ECO:0000255" key="1">
    <source>
        <dbReference type="HAMAP-Rule" id="MF_01428"/>
    </source>
</evidence>
<dbReference type="EC" id="6.1.1.-" evidence="1"/>
<dbReference type="EMBL" id="AE015451">
    <property type="protein sequence ID" value="AAN70267.1"/>
    <property type="molecule type" value="Genomic_DNA"/>
</dbReference>
<dbReference type="RefSeq" id="NP_746803.1">
    <property type="nucleotide sequence ID" value="NC_002947.4"/>
</dbReference>
<dbReference type="SMR" id="Q88DX4"/>
<dbReference type="STRING" id="160488.PP_4694"/>
<dbReference type="PaxDb" id="160488-PP_4694"/>
<dbReference type="KEGG" id="ppu:PP_4694"/>
<dbReference type="PATRIC" id="fig|160488.4.peg.5003"/>
<dbReference type="eggNOG" id="COG0008">
    <property type="taxonomic scope" value="Bacteria"/>
</dbReference>
<dbReference type="HOGENOM" id="CLU_015768_0_1_6"/>
<dbReference type="OrthoDB" id="9807503at2"/>
<dbReference type="PhylomeDB" id="Q88DX4"/>
<dbReference type="BioCyc" id="PPUT160488:G1G01-5013-MONOMER"/>
<dbReference type="Proteomes" id="UP000000556">
    <property type="component" value="Chromosome"/>
</dbReference>
<dbReference type="GO" id="GO:0005829">
    <property type="term" value="C:cytosol"/>
    <property type="evidence" value="ECO:0007669"/>
    <property type="project" value="TreeGrafter"/>
</dbReference>
<dbReference type="GO" id="GO:0005524">
    <property type="term" value="F:ATP binding"/>
    <property type="evidence" value="ECO:0007669"/>
    <property type="project" value="UniProtKB-KW"/>
</dbReference>
<dbReference type="GO" id="GO:0004818">
    <property type="term" value="F:glutamate-tRNA ligase activity"/>
    <property type="evidence" value="ECO:0007669"/>
    <property type="project" value="TreeGrafter"/>
</dbReference>
<dbReference type="GO" id="GO:0008270">
    <property type="term" value="F:zinc ion binding"/>
    <property type="evidence" value="ECO:0007669"/>
    <property type="project" value="UniProtKB-UniRule"/>
</dbReference>
<dbReference type="GO" id="GO:0006424">
    <property type="term" value="P:glutamyl-tRNA aminoacylation"/>
    <property type="evidence" value="ECO:0007669"/>
    <property type="project" value="InterPro"/>
</dbReference>
<dbReference type="GO" id="GO:0006400">
    <property type="term" value="P:tRNA modification"/>
    <property type="evidence" value="ECO:0007669"/>
    <property type="project" value="InterPro"/>
</dbReference>
<dbReference type="FunFam" id="3.40.50.620:FF:000093">
    <property type="entry name" value="Glutamyl-Q tRNA(Asp) synthetase"/>
    <property type="match status" value="1"/>
</dbReference>
<dbReference type="Gene3D" id="3.90.800.10">
    <property type="entry name" value="Glutamyl-tRNA Synthetase, Domain 3"/>
    <property type="match status" value="1"/>
</dbReference>
<dbReference type="Gene3D" id="3.40.50.620">
    <property type="entry name" value="HUPs"/>
    <property type="match status" value="1"/>
</dbReference>
<dbReference type="HAMAP" id="MF_01428">
    <property type="entry name" value="Glu_Q_tRNA_synth"/>
    <property type="match status" value="1"/>
</dbReference>
<dbReference type="InterPro" id="IPR022380">
    <property type="entry name" value="Glu-Q_tRNA(Asp)_Synthase"/>
</dbReference>
<dbReference type="InterPro" id="IPR000924">
    <property type="entry name" value="Glu/Gln-tRNA-synth"/>
</dbReference>
<dbReference type="InterPro" id="IPR020058">
    <property type="entry name" value="Glu/Gln-tRNA-synth_Ib_cat-dom"/>
</dbReference>
<dbReference type="InterPro" id="IPR049940">
    <property type="entry name" value="GluQ/Sye"/>
</dbReference>
<dbReference type="InterPro" id="IPR014729">
    <property type="entry name" value="Rossmann-like_a/b/a_fold"/>
</dbReference>
<dbReference type="NCBIfam" id="NF004314">
    <property type="entry name" value="PRK05710.1-3"/>
    <property type="match status" value="1"/>
</dbReference>
<dbReference type="NCBIfam" id="TIGR03838">
    <property type="entry name" value="queuosine_YadB"/>
    <property type="match status" value="1"/>
</dbReference>
<dbReference type="PANTHER" id="PTHR43311">
    <property type="entry name" value="GLUTAMATE--TRNA LIGASE"/>
    <property type="match status" value="1"/>
</dbReference>
<dbReference type="PANTHER" id="PTHR43311:SF1">
    <property type="entry name" value="GLUTAMYL-Q TRNA(ASP) SYNTHETASE"/>
    <property type="match status" value="1"/>
</dbReference>
<dbReference type="Pfam" id="PF00749">
    <property type="entry name" value="tRNA-synt_1c"/>
    <property type="match status" value="1"/>
</dbReference>
<dbReference type="PRINTS" id="PR00987">
    <property type="entry name" value="TRNASYNTHGLU"/>
</dbReference>
<dbReference type="SUPFAM" id="SSF52374">
    <property type="entry name" value="Nucleotidylyl transferase"/>
    <property type="match status" value="1"/>
</dbReference>
<sequence>MPSLTMTDSSYIGRFAPTPSGFLHFGSLVAALASWLDARAVNGRWLLRMEDTDPPREMPGARDAILQTLERYGLHWDGEVVFQSQRHDAYAAVVDRLFNMGLAYACTCSRKQLESYNGIYPGFCRNAGHAREGAAIRLRVPELIYRFTDRVQGEYQQHLGREVGDFVIQRRDGLYAYQLAVVLDDAWQGVTDIVRGADLLDNTPRQLYLQELLGFSQPRYLHIPLIVQPDGHKLGKSYRSPPLQAEHATPLLLRALRALGQETDPELLLATPAEVLAVARAQWRPEAIAQRTTVPEADLR</sequence>
<reference key="1">
    <citation type="journal article" date="2002" name="Environ. Microbiol.">
        <title>Complete genome sequence and comparative analysis of the metabolically versatile Pseudomonas putida KT2440.</title>
        <authorList>
            <person name="Nelson K.E."/>
            <person name="Weinel C."/>
            <person name="Paulsen I.T."/>
            <person name="Dodson R.J."/>
            <person name="Hilbert H."/>
            <person name="Martins dos Santos V.A.P."/>
            <person name="Fouts D.E."/>
            <person name="Gill S.R."/>
            <person name="Pop M."/>
            <person name="Holmes M."/>
            <person name="Brinkac L.M."/>
            <person name="Beanan M.J."/>
            <person name="DeBoy R.T."/>
            <person name="Daugherty S.C."/>
            <person name="Kolonay J.F."/>
            <person name="Madupu R."/>
            <person name="Nelson W.C."/>
            <person name="White O."/>
            <person name="Peterson J.D."/>
            <person name="Khouri H.M."/>
            <person name="Hance I."/>
            <person name="Chris Lee P."/>
            <person name="Holtzapple E.K."/>
            <person name="Scanlan D."/>
            <person name="Tran K."/>
            <person name="Moazzez A."/>
            <person name="Utterback T.R."/>
            <person name="Rizzo M."/>
            <person name="Lee K."/>
            <person name="Kosack D."/>
            <person name="Moestl D."/>
            <person name="Wedler H."/>
            <person name="Lauber J."/>
            <person name="Stjepandic D."/>
            <person name="Hoheisel J."/>
            <person name="Straetz M."/>
            <person name="Heim S."/>
            <person name="Kiewitz C."/>
            <person name="Eisen J.A."/>
            <person name="Timmis K.N."/>
            <person name="Duesterhoeft A."/>
            <person name="Tuemmler B."/>
            <person name="Fraser C.M."/>
        </authorList>
    </citation>
    <scope>NUCLEOTIDE SEQUENCE [LARGE SCALE GENOMIC DNA]</scope>
    <source>
        <strain>ATCC 47054 / DSM 6125 / CFBP 8728 / NCIMB 11950 / KT2440</strain>
    </source>
</reference>
<accession>Q88DX4</accession>
<gene>
    <name evidence="1" type="primary">gluQ</name>
    <name type="ordered locus">PP_4694</name>
</gene>
<comment type="function">
    <text evidence="1">Catalyzes the tRNA-independent activation of glutamate in presence of ATP and the subsequent transfer of glutamate onto a tRNA(Asp). Glutamate is transferred on the 2-amino-5-(4,5-dihydroxy-2-cyclopenten-1-yl) moiety of the queuosine in the wobble position of the QUC anticodon.</text>
</comment>
<comment type="cofactor">
    <cofactor evidence="1">
        <name>Zn(2+)</name>
        <dbReference type="ChEBI" id="CHEBI:29105"/>
    </cofactor>
    <text evidence="1">Binds 1 zinc ion per subunit.</text>
</comment>
<comment type="similarity">
    <text evidence="1">Belongs to the class-I aminoacyl-tRNA synthetase family. GluQ subfamily.</text>
</comment>
<name>GLUQ_PSEPK</name>
<protein>
    <recommendedName>
        <fullName evidence="1">Glutamyl-Q tRNA(Asp) synthetase</fullName>
        <shortName evidence="1">Glu-Q-RSs</shortName>
        <ecNumber evidence="1">6.1.1.-</ecNumber>
    </recommendedName>
</protein>
<feature type="chain" id="PRO_0000208316" description="Glutamyl-Q tRNA(Asp) synthetase">
    <location>
        <begin position="1"/>
        <end position="300"/>
    </location>
</feature>
<feature type="short sequence motif" description="'HIGH' region">
    <location>
        <begin position="17"/>
        <end position="27"/>
    </location>
</feature>
<feature type="short sequence motif" description="'KMSKS' region">
    <location>
        <begin position="233"/>
        <end position="237"/>
    </location>
</feature>
<feature type="binding site" evidence="1">
    <location>
        <begin position="14"/>
        <end position="18"/>
    </location>
    <ligand>
        <name>L-glutamate</name>
        <dbReference type="ChEBI" id="CHEBI:29985"/>
    </ligand>
</feature>
<feature type="binding site" evidence="1">
    <location>
        <position position="50"/>
    </location>
    <ligand>
        <name>L-glutamate</name>
        <dbReference type="ChEBI" id="CHEBI:29985"/>
    </ligand>
</feature>
<feature type="binding site" evidence="1">
    <location>
        <position position="106"/>
    </location>
    <ligand>
        <name>Zn(2+)</name>
        <dbReference type="ChEBI" id="CHEBI:29105"/>
    </ligand>
</feature>
<feature type="binding site" evidence="1">
    <location>
        <position position="108"/>
    </location>
    <ligand>
        <name>Zn(2+)</name>
        <dbReference type="ChEBI" id="CHEBI:29105"/>
    </ligand>
</feature>
<feature type="binding site" evidence="1">
    <location>
        <position position="120"/>
    </location>
    <ligand>
        <name>Zn(2+)</name>
        <dbReference type="ChEBI" id="CHEBI:29105"/>
    </ligand>
</feature>
<feature type="binding site" evidence="1">
    <location>
        <position position="124"/>
    </location>
    <ligand>
        <name>Zn(2+)</name>
        <dbReference type="ChEBI" id="CHEBI:29105"/>
    </ligand>
</feature>
<feature type="binding site" evidence="1">
    <location>
        <position position="177"/>
    </location>
    <ligand>
        <name>L-glutamate</name>
        <dbReference type="ChEBI" id="CHEBI:29985"/>
    </ligand>
</feature>
<feature type="binding site" evidence="1">
    <location>
        <position position="195"/>
    </location>
    <ligand>
        <name>L-glutamate</name>
        <dbReference type="ChEBI" id="CHEBI:29985"/>
    </ligand>
</feature>
<feature type="binding site" evidence="1">
    <location>
        <position position="236"/>
    </location>
    <ligand>
        <name>ATP</name>
        <dbReference type="ChEBI" id="CHEBI:30616"/>
    </ligand>
</feature>